<gene>
    <name type="primary">secG</name>
    <name type="ordered locus">SH2107</name>
</gene>
<accession>Q4L4K9</accession>
<reference key="1">
    <citation type="journal article" date="2005" name="J. Bacteriol.">
        <title>Whole-genome sequencing of Staphylococcus haemolyticus uncovers the extreme plasticity of its genome and the evolution of human-colonizing staphylococcal species.</title>
        <authorList>
            <person name="Takeuchi F."/>
            <person name="Watanabe S."/>
            <person name="Baba T."/>
            <person name="Yuzawa H."/>
            <person name="Ito T."/>
            <person name="Morimoto Y."/>
            <person name="Kuroda M."/>
            <person name="Cui L."/>
            <person name="Takahashi M."/>
            <person name="Ankai A."/>
            <person name="Baba S."/>
            <person name="Fukui S."/>
            <person name="Lee J.C."/>
            <person name="Hiramatsu K."/>
        </authorList>
    </citation>
    <scope>NUCLEOTIDE SEQUENCE [LARGE SCALE GENOMIC DNA]</scope>
    <source>
        <strain>JCSC1435</strain>
    </source>
</reference>
<keyword id="KW-1003">Cell membrane</keyword>
<keyword id="KW-0472">Membrane</keyword>
<keyword id="KW-0653">Protein transport</keyword>
<keyword id="KW-0811">Translocation</keyword>
<keyword id="KW-0812">Transmembrane</keyword>
<keyword id="KW-1133">Transmembrane helix</keyword>
<keyword id="KW-0813">Transport</keyword>
<sequence>MHTLFIVLLIIDCIALITVVLLQEGKSNGLSGAISGGAEQLFGKQKQRGVDLFLHRLTIILAVIFFLIMIGISYFGL</sequence>
<organism>
    <name type="scientific">Staphylococcus haemolyticus (strain JCSC1435)</name>
    <dbReference type="NCBI Taxonomy" id="279808"/>
    <lineage>
        <taxon>Bacteria</taxon>
        <taxon>Bacillati</taxon>
        <taxon>Bacillota</taxon>
        <taxon>Bacilli</taxon>
        <taxon>Bacillales</taxon>
        <taxon>Staphylococcaceae</taxon>
        <taxon>Staphylococcus</taxon>
    </lineage>
</organism>
<dbReference type="EMBL" id="AP006716">
    <property type="protein sequence ID" value="BAE05416.1"/>
    <property type="molecule type" value="Genomic_DNA"/>
</dbReference>
<dbReference type="RefSeq" id="WP_011276371.1">
    <property type="nucleotide sequence ID" value="NC_007168.1"/>
</dbReference>
<dbReference type="SMR" id="Q4L4K9"/>
<dbReference type="GeneID" id="93781431"/>
<dbReference type="KEGG" id="sha:SH2107"/>
<dbReference type="eggNOG" id="COG1314">
    <property type="taxonomic scope" value="Bacteria"/>
</dbReference>
<dbReference type="HOGENOM" id="CLU_094156_6_1_9"/>
<dbReference type="OrthoDB" id="1651166at2"/>
<dbReference type="Proteomes" id="UP000000543">
    <property type="component" value="Chromosome"/>
</dbReference>
<dbReference type="GO" id="GO:0005886">
    <property type="term" value="C:plasma membrane"/>
    <property type="evidence" value="ECO:0007669"/>
    <property type="project" value="UniProtKB-SubCell"/>
</dbReference>
<dbReference type="GO" id="GO:0015450">
    <property type="term" value="F:protein-transporting ATPase activity"/>
    <property type="evidence" value="ECO:0007669"/>
    <property type="project" value="InterPro"/>
</dbReference>
<dbReference type="GO" id="GO:0065002">
    <property type="term" value="P:intracellular protein transmembrane transport"/>
    <property type="evidence" value="ECO:0007669"/>
    <property type="project" value="TreeGrafter"/>
</dbReference>
<dbReference type="GO" id="GO:0009306">
    <property type="term" value="P:protein secretion"/>
    <property type="evidence" value="ECO:0007669"/>
    <property type="project" value="InterPro"/>
</dbReference>
<dbReference type="GO" id="GO:0043952">
    <property type="term" value="P:protein transport by the Sec complex"/>
    <property type="evidence" value="ECO:0007669"/>
    <property type="project" value="TreeGrafter"/>
</dbReference>
<dbReference type="InterPro" id="IPR004692">
    <property type="entry name" value="SecG"/>
</dbReference>
<dbReference type="NCBIfam" id="TIGR00810">
    <property type="entry name" value="secG"/>
    <property type="match status" value="1"/>
</dbReference>
<dbReference type="PANTHER" id="PTHR34182">
    <property type="entry name" value="PROTEIN-EXPORT MEMBRANE PROTEIN SECG"/>
    <property type="match status" value="1"/>
</dbReference>
<dbReference type="PANTHER" id="PTHR34182:SF1">
    <property type="entry name" value="PROTEIN-EXPORT MEMBRANE PROTEIN SECG"/>
    <property type="match status" value="1"/>
</dbReference>
<dbReference type="Pfam" id="PF03840">
    <property type="entry name" value="SecG"/>
    <property type="match status" value="1"/>
</dbReference>
<dbReference type="PRINTS" id="PR01651">
    <property type="entry name" value="SECGEXPORT"/>
</dbReference>
<feature type="chain" id="PRO_0000157248" description="Probable protein-export membrane protein SecG">
    <location>
        <begin position="1"/>
        <end position="77"/>
    </location>
</feature>
<feature type="transmembrane region" description="Helical" evidence="2">
    <location>
        <begin position="2"/>
        <end position="22"/>
    </location>
</feature>
<feature type="transmembrane region" description="Helical" evidence="2">
    <location>
        <begin position="57"/>
        <end position="77"/>
    </location>
</feature>
<evidence type="ECO:0000250" key="1"/>
<evidence type="ECO:0000255" key="2"/>
<evidence type="ECO:0000305" key="3"/>
<name>SECG_STAHJ</name>
<proteinExistence type="inferred from homology"/>
<protein>
    <recommendedName>
        <fullName>Probable protein-export membrane protein SecG</fullName>
    </recommendedName>
</protein>
<comment type="function">
    <text evidence="1">Involved in protein export. Participates in an early event of protein translocation (By similarity).</text>
</comment>
<comment type="subcellular location">
    <subcellularLocation>
        <location evidence="1">Cell membrane</location>
        <topology evidence="1">Multi-pass membrane protein</topology>
    </subcellularLocation>
</comment>
<comment type="similarity">
    <text evidence="3">Belongs to the SecG family.</text>
</comment>